<proteinExistence type="inferred from homology"/>
<organism>
    <name type="scientific">Cereibacter sphaeroides (strain KD131 / KCTC 12085)</name>
    <name type="common">Rhodobacter sphaeroides</name>
    <dbReference type="NCBI Taxonomy" id="557760"/>
    <lineage>
        <taxon>Bacteria</taxon>
        <taxon>Pseudomonadati</taxon>
        <taxon>Pseudomonadota</taxon>
        <taxon>Alphaproteobacteria</taxon>
        <taxon>Rhodobacterales</taxon>
        <taxon>Paracoccaceae</taxon>
        <taxon>Cereibacter</taxon>
    </lineage>
</organism>
<evidence type="ECO:0000255" key="1">
    <source>
        <dbReference type="HAMAP-Rule" id="MF_01224"/>
    </source>
</evidence>
<name>MOAC_CERSK</name>
<comment type="function">
    <text evidence="1">Catalyzes the conversion of (8S)-3',8-cyclo-7,8-dihydroguanosine 5'-triphosphate to cyclic pyranopterin monophosphate (cPMP).</text>
</comment>
<comment type="catalytic activity">
    <reaction evidence="1">
        <text>(8S)-3',8-cyclo-7,8-dihydroguanosine 5'-triphosphate = cyclic pyranopterin phosphate + diphosphate</text>
        <dbReference type="Rhea" id="RHEA:49580"/>
        <dbReference type="ChEBI" id="CHEBI:33019"/>
        <dbReference type="ChEBI" id="CHEBI:59648"/>
        <dbReference type="ChEBI" id="CHEBI:131766"/>
        <dbReference type="EC" id="4.6.1.17"/>
    </reaction>
</comment>
<comment type="pathway">
    <text evidence="1">Cofactor biosynthesis; molybdopterin biosynthesis.</text>
</comment>
<comment type="subunit">
    <text evidence="1">Homohexamer; trimer of dimers.</text>
</comment>
<comment type="similarity">
    <text evidence="1">Belongs to the MoaC family.</text>
</comment>
<reference key="1">
    <citation type="journal article" date="2009" name="J. Bacteriol.">
        <title>Complete genome sequence of Rhodobacter sphaeroides KD131.</title>
        <authorList>
            <person name="Lim S.-K."/>
            <person name="Kim S.J."/>
            <person name="Cha S.H."/>
            <person name="Oh Y.-K."/>
            <person name="Rhee H.-J."/>
            <person name="Kim M.-S."/>
            <person name="Lee J.K."/>
        </authorList>
    </citation>
    <scope>NUCLEOTIDE SEQUENCE [LARGE SCALE GENOMIC DNA]</scope>
    <source>
        <strain>KD131 / KCTC 12085</strain>
    </source>
</reference>
<feature type="chain" id="PRO_1000164899" description="Cyclic pyranopterin monophosphate synthase">
    <location>
        <begin position="1"/>
        <end position="159"/>
    </location>
</feature>
<feature type="active site" evidence="1">
    <location>
        <position position="128"/>
    </location>
</feature>
<feature type="binding site" evidence="1">
    <location>
        <begin position="75"/>
        <end position="77"/>
    </location>
    <ligand>
        <name>substrate</name>
    </ligand>
</feature>
<feature type="binding site" evidence="1">
    <location>
        <begin position="113"/>
        <end position="114"/>
    </location>
    <ligand>
        <name>substrate</name>
    </ligand>
</feature>
<accession>B9KMU9</accession>
<sequence length="159" mass="16453">MSGLTHFDESGRAHMVDVSEKPVTARVAVARGAVKMSAETLALVTEGRAEKGDVLGVARLAGIMGAKRTADLIPLCHPLPITKVALELTADPALPGVVVEATVKTGGQTGVEMEALTAVSVACLTIYDMVKAVEKGMEITGIRLLLKEGGKSGRFEASA</sequence>
<keyword id="KW-0456">Lyase</keyword>
<keyword id="KW-0501">Molybdenum cofactor biosynthesis</keyword>
<protein>
    <recommendedName>
        <fullName evidence="1">Cyclic pyranopterin monophosphate synthase</fullName>
        <ecNumber evidence="1">4.6.1.17</ecNumber>
    </recommendedName>
    <alternativeName>
        <fullName evidence="1">Molybdenum cofactor biosynthesis protein C</fullName>
    </alternativeName>
</protein>
<gene>
    <name evidence="1" type="primary">moaC</name>
    <name type="ordered locus">RSKD131_0301</name>
</gene>
<dbReference type="EC" id="4.6.1.17" evidence="1"/>
<dbReference type="EMBL" id="CP001150">
    <property type="protein sequence ID" value="ACM00161.1"/>
    <property type="molecule type" value="Genomic_DNA"/>
</dbReference>
<dbReference type="RefSeq" id="WP_002719152.1">
    <property type="nucleotide sequence ID" value="NC_011963.1"/>
</dbReference>
<dbReference type="SMR" id="B9KMU9"/>
<dbReference type="GeneID" id="67445780"/>
<dbReference type="KEGG" id="rsk:RSKD131_0301"/>
<dbReference type="HOGENOM" id="CLU_074693_1_1_5"/>
<dbReference type="UniPathway" id="UPA00344"/>
<dbReference type="GO" id="GO:0061799">
    <property type="term" value="F:cyclic pyranopterin monophosphate synthase activity"/>
    <property type="evidence" value="ECO:0007669"/>
    <property type="project" value="UniProtKB-UniRule"/>
</dbReference>
<dbReference type="GO" id="GO:0006777">
    <property type="term" value="P:Mo-molybdopterin cofactor biosynthetic process"/>
    <property type="evidence" value="ECO:0007669"/>
    <property type="project" value="UniProtKB-UniRule"/>
</dbReference>
<dbReference type="CDD" id="cd01420">
    <property type="entry name" value="MoaC_PE"/>
    <property type="match status" value="1"/>
</dbReference>
<dbReference type="Gene3D" id="3.30.70.640">
    <property type="entry name" value="Molybdopterin cofactor biosynthesis C (MoaC) domain"/>
    <property type="match status" value="1"/>
</dbReference>
<dbReference type="HAMAP" id="MF_01224_B">
    <property type="entry name" value="MoaC_B"/>
    <property type="match status" value="1"/>
</dbReference>
<dbReference type="InterPro" id="IPR023045">
    <property type="entry name" value="MoaC"/>
</dbReference>
<dbReference type="InterPro" id="IPR047594">
    <property type="entry name" value="MoaC_bact/euk"/>
</dbReference>
<dbReference type="InterPro" id="IPR036522">
    <property type="entry name" value="MoaC_sf"/>
</dbReference>
<dbReference type="InterPro" id="IPR050105">
    <property type="entry name" value="MoCo_biosynth_MoaA/MoaC"/>
</dbReference>
<dbReference type="InterPro" id="IPR002820">
    <property type="entry name" value="Mopterin_CF_biosynth-C_dom"/>
</dbReference>
<dbReference type="NCBIfam" id="TIGR00581">
    <property type="entry name" value="moaC"/>
    <property type="match status" value="1"/>
</dbReference>
<dbReference type="NCBIfam" id="NF006870">
    <property type="entry name" value="PRK09364.1"/>
    <property type="match status" value="1"/>
</dbReference>
<dbReference type="PANTHER" id="PTHR22960:SF29">
    <property type="entry name" value="CYCLIC PYRANOPTERIN MONOPHOSPHATE SYNTHASE"/>
    <property type="match status" value="1"/>
</dbReference>
<dbReference type="PANTHER" id="PTHR22960">
    <property type="entry name" value="MOLYBDOPTERIN COFACTOR SYNTHESIS PROTEIN A"/>
    <property type="match status" value="1"/>
</dbReference>
<dbReference type="Pfam" id="PF01967">
    <property type="entry name" value="MoaC"/>
    <property type="match status" value="1"/>
</dbReference>
<dbReference type="SUPFAM" id="SSF55040">
    <property type="entry name" value="Molybdenum cofactor biosynthesis protein C, MoaC"/>
    <property type="match status" value="1"/>
</dbReference>